<proteinExistence type="evidence at transcript level"/>
<sequence>MDFDEELNLCITKGKNVDHSFGGEASSTSPRSMKKMKSPSRPKPYFQSSSSPYSLEAFPFSLDPTLQNQQQQLGSYVPVLEQRQDPTMQGQKQMISFSPQQQQQQQQYMAQYWSDTLNLSPRGRMMMMMSQEAVQPYIATKLYRGVRQRQWGKWVAEIRKPRSRARLWLGTFDTAEEAAMAYDRQAFKLRGHSATLNFPEHFVNKESELHDSNSSDQKEPETPQPSEVNLESKELPVIDVGREEGMAEAWYNAITSGWGPESPLWDDLDSSHQFSSESSSSSPLSCPMRPFF</sequence>
<feature type="chain" id="PRO_0000290584" description="Ethylene-responsive transcription factor ERF054">
    <location>
        <begin position="1"/>
        <end position="292"/>
    </location>
</feature>
<feature type="DNA-binding region" description="AP2/ERF" evidence="2">
    <location>
        <begin position="142"/>
        <end position="199"/>
    </location>
</feature>
<feature type="region of interest" description="Disordered" evidence="3">
    <location>
        <begin position="14"/>
        <end position="51"/>
    </location>
</feature>
<feature type="region of interest" description="Disordered" evidence="3">
    <location>
        <begin position="207"/>
        <end position="238"/>
    </location>
</feature>
<feature type="region of interest" description="Disordered" evidence="3">
    <location>
        <begin position="265"/>
        <end position="292"/>
    </location>
</feature>
<feature type="compositionally biased region" description="Basic and acidic residues" evidence="3">
    <location>
        <begin position="207"/>
        <end position="221"/>
    </location>
</feature>
<feature type="compositionally biased region" description="Low complexity" evidence="3">
    <location>
        <begin position="271"/>
        <end position="285"/>
    </location>
</feature>
<keyword id="KW-0010">Activator</keyword>
<keyword id="KW-0238">DNA-binding</keyword>
<keyword id="KW-0936">Ethylene signaling pathway</keyword>
<keyword id="KW-0539">Nucleus</keyword>
<keyword id="KW-1185">Reference proteome</keyword>
<keyword id="KW-0804">Transcription</keyword>
<keyword id="KW-0805">Transcription regulation</keyword>
<evidence type="ECO:0000250" key="1"/>
<evidence type="ECO:0000255" key="2">
    <source>
        <dbReference type="PROSITE-ProRule" id="PRU00366"/>
    </source>
</evidence>
<evidence type="ECO:0000256" key="3">
    <source>
        <dbReference type="SAM" id="MobiDB-lite"/>
    </source>
</evidence>
<evidence type="ECO:0000305" key="4"/>
<name>ERF54_ARATH</name>
<gene>
    <name type="primary">ERF054</name>
    <name type="synonym">QRAP2</name>
    <name type="ordered locus">At4g28140</name>
    <name type="ORF">F26K10.20</name>
</gene>
<accession>Q9M0J3</accession>
<organism>
    <name type="scientific">Arabidopsis thaliana</name>
    <name type="common">Mouse-ear cress</name>
    <dbReference type="NCBI Taxonomy" id="3702"/>
    <lineage>
        <taxon>Eukaryota</taxon>
        <taxon>Viridiplantae</taxon>
        <taxon>Streptophyta</taxon>
        <taxon>Embryophyta</taxon>
        <taxon>Tracheophyta</taxon>
        <taxon>Spermatophyta</taxon>
        <taxon>Magnoliopsida</taxon>
        <taxon>eudicotyledons</taxon>
        <taxon>Gunneridae</taxon>
        <taxon>Pentapetalae</taxon>
        <taxon>rosids</taxon>
        <taxon>malvids</taxon>
        <taxon>Brassicales</taxon>
        <taxon>Brassicaceae</taxon>
        <taxon>Camelineae</taxon>
        <taxon>Arabidopsis</taxon>
    </lineage>
</organism>
<comment type="function">
    <text evidence="1">Probably acts as a transcriptional activator. Binds to the GCC-box pathogenesis-related promoter element. May be involved in the regulation of gene expression by stress factors and by components of stress signal transduction pathways (By similarity).</text>
</comment>
<comment type="subcellular location">
    <subcellularLocation>
        <location evidence="4">Nucleus</location>
    </subcellularLocation>
</comment>
<comment type="similarity">
    <text evidence="4">Belongs to the AP2/ERF transcription factor family. ERF subfamily.</text>
</comment>
<reference key="1">
    <citation type="submission" date="2005-04" db="EMBL/GenBank/DDBJ databases">
        <title>Molecular cloning, phylogenetic analysis, expressional profiling and biochemical studies of QRAP2 from Arabidopsis thaliana.</title>
        <authorList>
            <person name="Wei G."/>
            <person name="Lei J."/>
            <person name="Pan Y."/>
            <person name="Zhu Y.-X."/>
        </authorList>
    </citation>
    <scope>NUCLEOTIDE SEQUENCE [MRNA]</scope>
</reference>
<reference key="2">
    <citation type="journal article" date="1999" name="Nature">
        <title>Sequence and analysis of chromosome 4 of the plant Arabidopsis thaliana.</title>
        <authorList>
            <person name="Mayer K.F.X."/>
            <person name="Schueller C."/>
            <person name="Wambutt R."/>
            <person name="Murphy G."/>
            <person name="Volckaert G."/>
            <person name="Pohl T."/>
            <person name="Duesterhoeft A."/>
            <person name="Stiekema W."/>
            <person name="Entian K.-D."/>
            <person name="Terryn N."/>
            <person name="Harris B."/>
            <person name="Ansorge W."/>
            <person name="Brandt P."/>
            <person name="Grivell L.A."/>
            <person name="Rieger M."/>
            <person name="Weichselgartner M."/>
            <person name="de Simone V."/>
            <person name="Obermaier B."/>
            <person name="Mache R."/>
            <person name="Mueller M."/>
            <person name="Kreis M."/>
            <person name="Delseny M."/>
            <person name="Puigdomenech P."/>
            <person name="Watson M."/>
            <person name="Schmidtheini T."/>
            <person name="Reichert B."/>
            <person name="Portetelle D."/>
            <person name="Perez-Alonso M."/>
            <person name="Boutry M."/>
            <person name="Bancroft I."/>
            <person name="Vos P."/>
            <person name="Hoheisel J."/>
            <person name="Zimmermann W."/>
            <person name="Wedler H."/>
            <person name="Ridley P."/>
            <person name="Langham S.-A."/>
            <person name="McCullagh B."/>
            <person name="Bilham L."/>
            <person name="Robben J."/>
            <person name="van der Schueren J."/>
            <person name="Grymonprez B."/>
            <person name="Chuang Y.-J."/>
            <person name="Vandenbussche F."/>
            <person name="Braeken M."/>
            <person name="Weltjens I."/>
            <person name="Voet M."/>
            <person name="Bastiaens I."/>
            <person name="Aert R."/>
            <person name="Defoor E."/>
            <person name="Weitzenegger T."/>
            <person name="Bothe G."/>
            <person name="Ramsperger U."/>
            <person name="Hilbert H."/>
            <person name="Braun M."/>
            <person name="Holzer E."/>
            <person name="Brandt A."/>
            <person name="Peters S."/>
            <person name="van Staveren M."/>
            <person name="Dirkse W."/>
            <person name="Mooijman P."/>
            <person name="Klein Lankhorst R."/>
            <person name="Rose M."/>
            <person name="Hauf J."/>
            <person name="Koetter P."/>
            <person name="Berneiser S."/>
            <person name="Hempel S."/>
            <person name="Feldpausch M."/>
            <person name="Lamberth S."/>
            <person name="Van den Daele H."/>
            <person name="De Keyser A."/>
            <person name="Buysshaert C."/>
            <person name="Gielen J."/>
            <person name="Villarroel R."/>
            <person name="De Clercq R."/>
            <person name="van Montagu M."/>
            <person name="Rogers J."/>
            <person name="Cronin A."/>
            <person name="Quail M.A."/>
            <person name="Bray-Allen S."/>
            <person name="Clark L."/>
            <person name="Doggett J."/>
            <person name="Hall S."/>
            <person name="Kay M."/>
            <person name="Lennard N."/>
            <person name="McLay K."/>
            <person name="Mayes R."/>
            <person name="Pettett A."/>
            <person name="Rajandream M.A."/>
            <person name="Lyne M."/>
            <person name="Benes V."/>
            <person name="Rechmann S."/>
            <person name="Borkova D."/>
            <person name="Bloecker H."/>
            <person name="Scharfe M."/>
            <person name="Grimm M."/>
            <person name="Loehnert T.-H."/>
            <person name="Dose S."/>
            <person name="de Haan M."/>
            <person name="Maarse A.C."/>
            <person name="Schaefer M."/>
            <person name="Mueller-Auer S."/>
            <person name="Gabel C."/>
            <person name="Fuchs M."/>
            <person name="Fartmann B."/>
            <person name="Granderath K."/>
            <person name="Dauner D."/>
            <person name="Herzl A."/>
            <person name="Neumann S."/>
            <person name="Argiriou A."/>
            <person name="Vitale D."/>
            <person name="Liguori R."/>
            <person name="Piravandi E."/>
            <person name="Massenet O."/>
            <person name="Quigley F."/>
            <person name="Clabauld G."/>
            <person name="Muendlein A."/>
            <person name="Felber R."/>
            <person name="Schnabl S."/>
            <person name="Hiller R."/>
            <person name="Schmidt W."/>
            <person name="Lecharny A."/>
            <person name="Aubourg S."/>
            <person name="Chefdor F."/>
            <person name="Cooke R."/>
            <person name="Berger C."/>
            <person name="Monfort A."/>
            <person name="Casacuberta E."/>
            <person name="Gibbons T."/>
            <person name="Weber N."/>
            <person name="Vandenbol M."/>
            <person name="Bargues M."/>
            <person name="Terol J."/>
            <person name="Torres A."/>
            <person name="Perez-Perez A."/>
            <person name="Purnelle B."/>
            <person name="Bent E."/>
            <person name="Johnson S."/>
            <person name="Tacon D."/>
            <person name="Jesse T."/>
            <person name="Heijnen L."/>
            <person name="Schwarz S."/>
            <person name="Scholler P."/>
            <person name="Heber S."/>
            <person name="Francs P."/>
            <person name="Bielke C."/>
            <person name="Frishman D."/>
            <person name="Haase D."/>
            <person name="Lemcke K."/>
            <person name="Mewes H.-W."/>
            <person name="Stocker S."/>
            <person name="Zaccaria P."/>
            <person name="Bevan M."/>
            <person name="Wilson R.K."/>
            <person name="de la Bastide M."/>
            <person name="Habermann K."/>
            <person name="Parnell L."/>
            <person name="Dedhia N."/>
            <person name="Gnoj L."/>
            <person name="Schutz K."/>
            <person name="Huang E."/>
            <person name="Spiegel L."/>
            <person name="Sekhon M."/>
            <person name="Murray J."/>
            <person name="Sheet P."/>
            <person name="Cordes M."/>
            <person name="Abu-Threideh J."/>
            <person name="Stoneking T."/>
            <person name="Kalicki J."/>
            <person name="Graves T."/>
            <person name="Harmon G."/>
            <person name="Edwards J."/>
            <person name="Latreille P."/>
            <person name="Courtney L."/>
            <person name="Cloud J."/>
            <person name="Abbott A."/>
            <person name="Scott K."/>
            <person name="Johnson D."/>
            <person name="Minx P."/>
            <person name="Bentley D."/>
            <person name="Fulton B."/>
            <person name="Miller N."/>
            <person name="Greco T."/>
            <person name="Kemp K."/>
            <person name="Kramer J."/>
            <person name="Fulton L."/>
            <person name="Mardis E."/>
            <person name="Dante M."/>
            <person name="Pepin K."/>
            <person name="Hillier L.W."/>
            <person name="Nelson J."/>
            <person name="Spieth J."/>
            <person name="Ryan E."/>
            <person name="Andrews S."/>
            <person name="Geisel C."/>
            <person name="Layman D."/>
            <person name="Du H."/>
            <person name="Ali J."/>
            <person name="Berghoff A."/>
            <person name="Jones K."/>
            <person name="Drone K."/>
            <person name="Cotton M."/>
            <person name="Joshu C."/>
            <person name="Antonoiu B."/>
            <person name="Zidanic M."/>
            <person name="Strong C."/>
            <person name="Sun H."/>
            <person name="Lamar B."/>
            <person name="Yordan C."/>
            <person name="Ma P."/>
            <person name="Zhong J."/>
            <person name="Preston R."/>
            <person name="Vil D."/>
            <person name="Shekher M."/>
            <person name="Matero A."/>
            <person name="Shah R."/>
            <person name="Swaby I.K."/>
            <person name="O'Shaughnessy A."/>
            <person name="Rodriguez M."/>
            <person name="Hoffman J."/>
            <person name="Till S."/>
            <person name="Granat S."/>
            <person name="Shohdy N."/>
            <person name="Hasegawa A."/>
            <person name="Hameed A."/>
            <person name="Lodhi M."/>
            <person name="Johnson A."/>
            <person name="Chen E."/>
            <person name="Marra M.A."/>
            <person name="Martienssen R."/>
            <person name="McCombie W.R."/>
        </authorList>
    </citation>
    <scope>NUCLEOTIDE SEQUENCE [LARGE SCALE GENOMIC DNA]</scope>
    <source>
        <strain>cv. Columbia</strain>
    </source>
</reference>
<reference key="3">
    <citation type="journal article" date="2017" name="Plant J.">
        <title>Araport11: a complete reannotation of the Arabidopsis thaliana reference genome.</title>
        <authorList>
            <person name="Cheng C.Y."/>
            <person name="Krishnakumar V."/>
            <person name="Chan A.P."/>
            <person name="Thibaud-Nissen F."/>
            <person name="Schobel S."/>
            <person name="Town C.D."/>
        </authorList>
    </citation>
    <scope>GENOME REANNOTATION</scope>
    <source>
        <strain>cv. Columbia</strain>
    </source>
</reference>
<reference key="4">
    <citation type="journal article" date="2003" name="Science">
        <title>Empirical analysis of transcriptional activity in the Arabidopsis genome.</title>
        <authorList>
            <person name="Yamada K."/>
            <person name="Lim J."/>
            <person name="Dale J.M."/>
            <person name="Chen H."/>
            <person name="Shinn P."/>
            <person name="Palm C.J."/>
            <person name="Southwick A.M."/>
            <person name="Wu H.C."/>
            <person name="Kim C.J."/>
            <person name="Nguyen M."/>
            <person name="Pham P.K."/>
            <person name="Cheuk R.F."/>
            <person name="Karlin-Newmann G."/>
            <person name="Liu S.X."/>
            <person name="Lam B."/>
            <person name="Sakano H."/>
            <person name="Wu T."/>
            <person name="Yu G."/>
            <person name="Miranda M."/>
            <person name="Quach H.L."/>
            <person name="Tripp M."/>
            <person name="Chang C.H."/>
            <person name="Lee J.M."/>
            <person name="Toriumi M.J."/>
            <person name="Chan M.M."/>
            <person name="Tang C.C."/>
            <person name="Onodera C.S."/>
            <person name="Deng J.M."/>
            <person name="Akiyama K."/>
            <person name="Ansari Y."/>
            <person name="Arakawa T."/>
            <person name="Banh J."/>
            <person name="Banno F."/>
            <person name="Bowser L."/>
            <person name="Brooks S.Y."/>
            <person name="Carninci P."/>
            <person name="Chao Q."/>
            <person name="Choy N."/>
            <person name="Enju A."/>
            <person name="Goldsmith A.D."/>
            <person name="Gurjal M."/>
            <person name="Hansen N.F."/>
            <person name="Hayashizaki Y."/>
            <person name="Johnson-Hopson C."/>
            <person name="Hsuan V.W."/>
            <person name="Iida K."/>
            <person name="Karnes M."/>
            <person name="Khan S."/>
            <person name="Koesema E."/>
            <person name="Ishida J."/>
            <person name="Jiang P.X."/>
            <person name="Jones T."/>
            <person name="Kawai J."/>
            <person name="Kamiya A."/>
            <person name="Meyers C."/>
            <person name="Nakajima M."/>
            <person name="Narusaka M."/>
            <person name="Seki M."/>
            <person name="Sakurai T."/>
            <person name="Satou M."/>
            <person name="Tamse R."/>
            <person name="Vaysberg M."/>
            <person name="Wallender E.K."/>
            <person name="Wong C."/>
            <person name="Yamamura Y."/>
            <person name="Yuan S."/>
            <person name="Shinozaki K."/>
            <person name="Davis R.W."/>
            <person name="Theologis A."/>
            <person name="Ecker J.R."/>
        </authorList>
    </citation>
    <scope>NUCLEOTIDE SEQUENCE [LARGE SCALE MRNA]</scope>
    <source>
        <strain>cv. Columbia</strain>
    </source>
</reference>
<reference key="5">
    <citation type="journal article" date="2006" name="Plant Physiol.">
        <title>Genome-wide analysis of the ERF gene family in Arabidopsis and rice.</title>
        <authorList>
            <person name="Nakano T."/>
            <person name="Suzuki K."/>
            <person name="Fujimura T."/>
            <person name="Shinshi H."/>
        </authorList>
    </citation>
    <scope>GENE FAMILY</scope>
    <scope>NOMENCLATURE</scope>
</reference>
<protein>
    <recommendedName>
        <fullName>Ethylene-responsive transcription factor ERF054</fullName>
    </recommendedName>
    <alternativeName>
        <fullName>Transcription factor QRAP2</fullName>
    </alternativeName>
</protein>
<dbReference type="EMBL" id="DQ011579">
    <property type="protein sequence ID" value="AAY32922.1"/>
    <property type="molecule type" value="mRNA"/>
</dbReference>
<dbReference type="EMBL" id="AL161572">
    <property type="protein sequence ID" value="CAB79616.1"/>
    <property type="molecule type" value="Genomic_DNA"/>
</dbReference>
<dbReference type="EMBL" id="CP002687">
    <property type="protein sequence ID" value="AEE85444.1"/>
    <property type="molecule type" value="Genomic_DNA"/>
</dbReference>
<dbReference type="EMBL" id="AY074574">
    <property type="protein sequence ID" value="AAL67114.1"/>
    <property type="molecule type" value="mRNA"/>
</dbReference>
<dbReference type="EMBL" id="AY097394">
    <property type="protein sequence ID" value="AAM19910.1"/>
    <property type="molecule type" value="mRNA"/>
</dbReference>
<dbReference type="PIR" id="T09030">
    <property type="entry name" value="T09030"/>
</dbReference>
<dbReference type="RefSeq" id="NP_194543.1">
    <property type="nucleotide sequence ID" value="NM_118954.4"/>
</dbReference>
<dbReference type="SMR" id="Q9M0J3"/>
<dbReference type="BioGRID" id="14216">
    <property type="interactions" value="1"/>
</dbReference>
<dbReference type="FunCoup" id="Q9M0J3">
    <property type="interactions" value="14"/>
</dbReference>
<dbReference type="STRING" id="3702.Q9M0J3"/>
<dbReference type="PaxDb" id="3702-AT4G28140.1"/>
<dbReference type="EnsemblPlants" id="AT4G28140.1">
    <property type="protein sequence ID" value="AT4G28140.1"/>
    <property type="gene ID" value="AT4G28140"/>
</dbReference>
<dbReference type="GeneID" id="828929"/>
<dbReference type="Gramene" id="AT4G28140.1">
    <property type="protein sequence ID" value="AT4G28140.1"/>
    <property type="gene ID" value="AT4G28140"/>
</dbReference>
<dbReference type="KEGG" id="ath:AT4G28140"/>
<dbReference type="Araport" id="AT4G28140"/>
<dbReference type="TAIR" id="AT4G28140">
    <property type="gene designation" value="ERF54"/>
</dbReference>
<dbReference type="eggNOG" id="ENOG502QU46">
    <property type="taxonomic scope" value="Eukaryota"/>
</dbReference>
<dbReference type="HOGENOM" id="CLU_047640_0_0_1"/>
<dbReference type="InParanoid" id="Q9M0J3"/>
<dbReference type="OMA" id="CEEMEWG"/>
<dbReference type="PhylomeDB" id="Q9M0J3"/>
<dbReference type="PRO" id="PR:Q9M0J3"/>
<dbReference type="Proteomes" id="UP000006548">
    <property type="component" value="Chromosome 4"/>
</dbReference>
<dbReference type="ExpressionAtlas" id="Q9M0J3">
    <property type="expression patterns" value="baseline and differential"/>
</dbReference>
<dbReference type="GO" id="GO:0005634">
    <property type="term" value="C:nucleus"/>
    <property type="evidence" value="ECO:0007669"/>
    <property type="project" value="UniProtKB-SubCell"/>
</dbReference>
<dbReference type="GO" id="GO:0003700">
    <property type="term" value="F:DNA-binding transcription factor activity"/>
    <property type="evidence" value="ECO:0000250"/>
    <property type="project" value="TAIR"/>
</dbReference>
<dbReference type="GO" id="GO:0000976">
    <property type="term" value="F:transcription cis-regulatory region binding"/>
    <property type="evidence" value="ECO:0000353"/>
    <property type="project" value="TAIR"/>
</dbReference>
<dbReference type="GO" id="GO:0009873">
    <property type="term" value="P:ethylene-activated signaling pathway"/>
    <property type="evidence" value="ECO:0007669"/>
    <property type="project" value="UniProtKB-KW"/>
</dbReference>
<dbReference type="GO" id="GO:0009408">
    <property type="term" value="P:response to heat"/>
    <property type="evidence" value="ECO:0000270"/>
    <property type="project" value="TAIR"/>
</dbReference>
<dbReference type="CDD" id="cd00018">
    <property type="entry name" value="AP2"/>
    <property type="match status" value="1"/>
</dbReference>
<dbReference type="FunFam" id="3.30.730.10:FF:000001">
    <property type="entry name" value="Ethylene-responsive transcription factor 2"/>
    <property type="match status" value="1"/>
</dbReference>
<dbReference type="Gene3D" id="3.30.730.10">
    <property type="entry name" value="AP2/ERF domain"/>
    <property type="match status" value="1"/>
</dbReference>
<dbReference type="InterPro" id="IPR001471">
    <property type="entry name" value="AP2/ERF_dom"/>
</dbReference>
<dbReference type="InterPro" id="IPR036955">
    <property type="entry name" value="AP2/ERF_dom_sf"/>
</dbReference>
<dbReference type="InterPro" id="IPR016177">
    <property type="entry name" value="DNA-bd_dom_sf"/>
</dbReference>
<dbReference type="InterPro" id="IPR051758">
    <property type="entry name" value="ERF/AP2-like"/>
</dbReference>
<dbReference type="PANTHER" id="PTHR31657:SF36">
    <property type="entry name" value="ETHYLENE-RESPONSIVE TRANSCRIPTION FACTOR ERF054"/>
    <property type="match status" value="1"/>
</dbReference>
<dbReference type="PANTHER" id="PTHR31657">
    <property type="entry name" value="ETHYLENE-RESPONSIVE TRANSCRIPTION FACTOR ERF061"/>
    <property type="match status" value="1"/>
</dbReference>
<dbReference type="Pfam" id="PF00847">
    <property type="entry name" value="AP2"/>
    <property type="match status" value="1"/>
</dbReference>
<dbReference type="PRINTS" id="PR00367">
    <property type="entry name" value="ETHRSPELEMNT"/>
</dbReference>
<dbReference type="SMART" id="SM00380">
    <property type="entry name" value="AP2"/>
    <property type="match status" value="1"/>
</dbReference>
<dbReference type="SUPFAM" id="SSF54171">
    <property type="entry name" value="DNA-binding domain"/>
    <property type="match status" value="1"/>
</dbReference>
<dbReference type="PROSITE" id="PS51032">
    <property type="entry name" value="AP2_ERF"/>
    <property type="match status" value="1"/>
</dbReference>